<name>NHAA1_MYCSK</name>
<evidence type="ECO:0000255" key="1">
    <source>
        <dbReference type="HAMAP-Rule" id="MF_01844"/>
    </source>
</evidence>
<evidence type="ECO:0000256" key="2">
    <source>
        <dbReference type="SAM" id="MobiDB-lite"/>
    </source>
</evidence>
<evidence type="ECO:0000305" key="3"/>
<sequence length="613" mass="66435">MTEASARTIGPLPSRFSRDPKTPRSTDNAAAALLLAFTVLAILWANSPWAQSYSIFWDTDVAVSFGEYRAELSVKHLVNDGLMAFFFFIVGLEVKSEFVIGELTDRSRAAVPVVAAIAGLIVPAVIFLTFNPSGPDAQAWGVVISTDTAFLVGALAVIKPKFPARLRIFLLTLAVVDDVGALGAIALFYTDDLKLAPLAVAALLIAALAMVRRLPSLRGPAYAVLGFALWIALYLAHVHPTLAGVAVAVLIPVFTPERRQVEQTVDLVRAFRQSPNPQYARAVTRGLRESISINERLQTAVGPYVSFVVLPIFALANAGVHLDEQTITAAMSSTLTWGIVAGLVVGKFVGITAATALMSATGWGQLAPGLSLRRVAGGAALSGIGFTISLFIVDVAIEDPARQDEARVGVLIASVLAFTLSWALFRITDWISPPEPVGLTLVRPVDPERDHIRGDPDAPLVLVEYGDYECPFCGRATGAIDEVRTHFGDDLLYVWRHFPLERAHPRSFDAARASEGAAAQGKFFEMGRELFAHQDDLEWSDMYRYAVAIGLDIEQFDQDVRVHASKVLHRVRDDAQDAEVMDLNSTPTFFVNGKRHKGPWDAASLIRALEAGR</sequence>
<protein>
    <recommendedName>
        <fullName evidence="1">Na(+)/H(+) antiporter NhaA 1</fullName>
    </recommendedName>
    <alternativeName>
        <fullName evidence="1">Sodium/proton antiporter NhaA 1</fullName>
    </alternativeName>
</protein>
<feature type="chain" id="PRO_0000334480" description="Na(+)/H(+) antiporter NhaA 1">
    <location>
        <begin position="1"/>
        <end position="613"/>
    </location>
</feature>
<feature type="transmembrane region" description="Helical" evidence="1">
    <location>
        <begin position="29"/>
        <end position="49"/>
    </location>
</feature>
<feature type="transmembrane region" description="Helical" evidence="1">
    <location>
        <begin position="81"/>
        <end position="101"/>
    </location>
</feature>
<feature type="transmembrane region" description="Helical" evidence="1">
    <location>
        <begin position="110"/>
        <end position="130"/>
    </location>
</feature>
<feature type="transmembrane region" description="Helical" evidence="1">
    <location>
        <begin position="138"/>
        <end position="158"/>
    </location>
</feature>
<feature type="transmembrane region" description="Helical" evidence="1">
    <location>
        <begin position="168"/>
        <end position="188"/>
    </location>
</feature>
<feature type="transmembrane region" description="Helical" evidence="1">
    <location>
        <begin position="191"/>
        <end position="211"/>
    </location>
</feature>
<feature type="transmembrane region" description="Helical" evidence="1">
    <location>
        <begin position="231"/>
        <end position="251"/>
    </location>
</feature>
<feature type="transmembrane region" description="Helical" evidence="1">
    <location>
        <begin position="300"/>
        <end position="320"/>
    </location>
</feature>
<feature type="transmembrane region" description="Helical" evidence="1">
    <location>
        <begin position="337"/>
        <end position="357"/>
    </location>
</feature>
<feature type="transmembrane region" description="Helical" evidence="1">
    <location>
        <begin position="377"/>
        <end position="397"/>
    </location>
</feature>
<feature type="transmembrane region" description="Helical" evidence="1">
    <location>
        <begin position="408"/>
        <end position="428"/>
    </location>
</feature>
<feature type="domain" description="Thioredoxin">
    <location>
        <begin position="409"/>
        <end position="613"/>
    </location>
</feature>
<feature type="region of interest" description="Na(+)/H(+) antiporter NhaA">
    <location>
        <begin position="1"/>
        <end position="408"/>
    </location>
</feature>
<feature type="region of interest" description="Disordered" evidence="2">
    <location>
        <begin position="1"/>
        <end position="23"/>
    </location>
</feature>
<gene>
    <name evidence="1" type="primary">nhaA1</name>
    <name type="ordered locus">Mkms_0497</name>
</gene>
<reference key="1">
    <citation type="submission" date="2006-12" db="EMBL/GenBank/DDBJ databases">
        <title>Complete sequence of chromosome of Mycobacterium sp. KMS.</title>
        <authorList>
            <consortium name="US DOE Joint Genome Institute"/>
            <person name="Copeland A."/>
            <person name="Lucas S."/>
            <person name="Lapidus A."/>
            <person name="Barry K."/>
            <person name="Detter J.C."/>
            <person name="Glavina del Rio T."/>
            <person name="Hammon N."/>
            <person name="Israni S."/>
            <person name="Dalin E."/>
            <person name="Tice H."/>
            <person name="Pitluck S."/>
            <person name="Kiss H."/>
            <person name="Brettin T."/>
            <person name="Bruce D."/>
            <person name="Han C."/>
            <person name="Tapia R."/>
            <person name="Gilna P."/>
            <person name="Schmutz J."/>
            <person name="Larimer F."/>
            <person name="Land M."/>
            <person name="Hauser L."/>
            <person name="Kyrpides N."/>
            <person name="Mikhailova N."/>
            <person name="Miller C.D."/>
            <person name="Richardson P."/>
        </authorList>
    </citation>
    <scope>NUCLEOTIDE SEQUENCE [LARGE SCALE GENOMIC DNA]</scope>
    <source>
        <strain>KMS</strain>
    </source>
</reference>
<comment type="function">
    <text evidence="1">Na(+)/H(+) antiporter that extrudes sodium in exchange for external protons.</text>
</comment>
<comment type="catalytic activity">
    <reaction evidence="1">
        <text>Na(+)(in) + 2 H(+)(out) = Na(+)(out) + 2 H(+)(in)</text>
        <dbReference type="Rhea" id="RHEA:29251"/>
        <dbReference type="ChEBI" id="CHEBI:15378"/>
        <dbReference type="ChEBI" id="CHEBI:29101"/>
    </reaction>
    <physiologicalReaction direction="left-to-right" evidence="1">
        <dbReference type="Rhea" id="RHEA:29252"/>
    </physiologicalReaction>
</comment>
<comment type="subcellular location">
    <subcellularLocation>
        <location evidence="1">Cell membrane</location>
        <topology evidence="1">Multi-pass membrane protein</topology>
    </subcellularLocation>
</comment>
<comment type="similarity">
    <text evidence="3">In the N-terminal section; belongs to the NhaA Na(+)/H(+) (TC 2.A.33) antiporter family.</text>
</comment>
<organism>
    <name type="scientific">Mycobacterium sp. (strain KMS)</name>
    <dbReference type="NCBI Taxonomy" id="189918"/>
    <lineage>
        <taxon>Bacteria</taxon>
        <taxon>Bacillati</taxon>
        <taxon>Actinomycetota</taxon>
        <taxon>Actinomycetes</taxon>
        <taxon>Mycobacteriales</taxon>
        <taxon>Mycobacteriaceae</taxon>
        <taxon>Mycobacterium</taxon>
    </lineage>
</organism>
<keyword id="KW-0050">Antiport</keyword>
<keyword id="KW-1003">Cell membrane</keyword>
<keyword id="KW-0406">Ion transport</keyword>
<keyword id="KW-0472">Membrane</keyword>
<keyword id="KW-0915">Sodium</keyword>
<keyword id="KW-0739">Sodium transport</keyword>
<keyword id="KW-0812">Transmembrane</keyword>
<keyword id="KW-1133">Transmembrane helix</keyword>
<keyword id="KW-0813">Transport</keyword>
<dbReference type="EMBL" id="CP000518">
    <property type="protein sequence ID" value="ABL89713.1"/>
    <property type="molecule type" value="Genomic_DNA"/>
</dbReference>
<dbReference type="SMR" id="A1UA55"/>
<dbReference type="STRING" id="189918.Mkms_0497"/>
<dbReference type="KEGG" id="mkm:Mkms_0497"/>
<dbReference type="HOGENOM" id="CLU_015803_3_0_11"/>
<dbReference type="OrthoDB" id="117402at2"/>
<dbReference type="GO" id="GO:0005886">
    <property type="term" value="C:plasma membrane"/>
    <property type="evidence" value="ECO:0007669"/>
    <property type="project" value="UniProtKB-SubCell"/>
</dbReference>
<dbReference type="GO" id="GO:0016491">
    <property type="term" value="F:oxidoreductase activity"/>
    <property type="evidence" value="ECO:0007669"/>
    <property type="project" value="UniProtKB-ARBA"/>
</dbReference>
<dbReference type="GO" id="GO:0015385">
    <property type="term" value="F:sodium:proton antiporter activity"/>
    <property type="evidence" value="ECO:0007669"/>
    <property type="project" value="TreeGrafter"/>
</dbReference>
<dbReference type="GO" id="GO:0006885">
    <property type="term" value="P:regulation of pH"/>
    <property type="evidence" value="ECO:0007669"/>
    <property type="project" value="InterPro"/>
</dbReference>
<dbReference type="Gene3D" id="3.40.30.10">
    <property type="entry name" value="Glutaredoxin"/>
    <property type="match status" value="1"/>
</dbReference>
<dbReference type="Gene3D" id="1.20.1530.10">
    <property type="entry name" value="Na+/H+ antiporter like domain"/>
    <property type="match status" value="1"/>
</dbReference>
<dbReference type="HAMAP" id="MF_01844">
    <property type="entry name" value="NhaA"/>
    <property type="match status" value="1"/>
</dbReference>
<dbReference type="InterPro" id="IPR023171">
    <property type="entry name" value="Na/H_antiporter_dom_sf"/>
</dbReference>
<dbReference type="InterPro" id="IPR004670">
    <property type="entry name" value="NhaA"/>
</dbReference>
<dbReference type="InterPro" id="IPR012336">
    <property type="entry name" value="Thioredoxin-like_fold"/>
</dbReference>
<dbReference type="InterPro" id="IPR036249">
    <property type="entry name" value="Thioredoxin-like_sf"/>
</dbReference>
<dbReference type="InterPro" id="IPR013766">
    <property type="entry name" value="Thioredoxin_domain"/>
</dbReference>
<dbReference type="NCBIfam" id="TIGR00773">
    <property type="entry name" value="NhaA"/>
    <property type="match status" value="1"/>
</dbReference>
<dbReference type="PANTHER" id="PTHR30341:SF0">
    <property type="entry name" value="NA(+)_H(+) ANTIPORTER NHAA"/>
    <property type="match status" value="1"/>
</dbReference>
<dbReference type="PANTHER" id="PTHR30341">
    <property type="entry name" value="SODIUM ION/PROTON ANTIPORTER NHAA-RELATED"/>
    <property type="match status" value="1"/>
</dbReference>
<dbReference type="Pfam" id="PF06965">
    <property type="entry name" value="Na_H_antiport_1"/>
    <property type="match status" value="1"/>
</dbReference>
<dbReference type="Pfam" id="PF13462">
    <property type="entry name" value="Thioredoxin_4"/>
    <property type="match status" value="1"/>
</dbReference>
<dbReference type="SUPFAM" id="SSF52833">
    <property type="entry name" value="Thioredoxin-like"/>
    <property type="match status" value="1"/>
</dbReference>
<dbReference type="PROSITE" id="PS51352">
    <property type="entry name" value="THIOREDOXIN_2"/>
    <property type="match status" value="1"/>
</dbReference>
<proteinExistence type="inferred from homology"/>
<accession>A1UA55</accession>